<comment type="catalytic activity">
    <reaction>
        <text>tRNA(Phe) + L-phenylalanine + ATP = L-phenylalanyl-tRNA(Phe) + AMP + diphosphate + H(+)</text>
        <dbReference type="Rhea" id="RHEA:19413"/>
        <dbReference type="Rhea" id="RHEA-COMP:9668"/>
        <dbReference type="Rhea" id="RHEA-COMP:9699"/>
        <dbReference type="ChEBI" id="CHEBI:15378"/>
        <dbReference type="ChEBI" id="CHEBI:30616"/>
        <dbReference type="ChEBI" id="CHEBI:33019"/>
        <dbReference type="ChEBI" id="CHEBI:58095"/>
        <dbReference type="ChEBI" id="CHEBI:78442"/>
        <dbReference type="ChEBI" id="CHEBI:78531"/>
        <dbReference type="ChEBI" id="CHEBI:456215"/>
        <dbReference type="EC" id="6.1.1.20"/>
    </reaction>
</comment>
<comment type="cofactor">
    <cofactor evidence="2">
        <name>Mg(2+)</name>
        <dbReference type="ChEBI" id="CHEBI:18420"/>
    </cofactor>
</comment>
<comment type="subunit">
    <text evidence="1">Tetramer of two alpha and two beta subunits.</text>
</comment>
<comment type="subcellular location">
    <subcellularLocation>
        <location evidence="4">Cytoplasm</location>
    </subcellularLocation>
    <subcellularLocation>
        <location evidence="4">Nucleus</location>
    </subcellularLocation>
</comment>
<comment type="similarity">
    <text evidence="5">Belongs to the phenylalanyl-tRNA synthetase beta subunit family. Type 2 subfamily.</text>
</comment>
<name>SYFB_SCHPO</name>
<protein>
    <recommendedName>
        <fullName>Phenylalanine--tRNA ligase beta subunit</fullName>
        <ecNumber>6.1.1.20</ecNumber>
    </recommendedName>
    <alternativeName>
        <fullName>Phenylalanyl-tRNA synthetase beta subunit</fullName>
        <shortName>PheRS</shortName>
    </alternativeName>
</protein>
<gene>
    <name type="primary">frs1</name>
    <name type="ORF">SPAC23A1.12c</name>
</gene>
<proteinExistence type="inferred from homology"/>
<sequence length="589" mass="66850">MPTISCDKEELYKALGREYTTQEFDELCFQFGIELDEDTTNDPERSPSERPSLKIDIPANRYDMLCLEGIAQALNVFNRRMATPQYKLLPSTTSLTISPETSEIRPYAAAAILRGVKLDPIRYQSFIALQDKLHANLCRNRTLVAIGTHDFSVMEGPFTYEALKPEEINFVPLNQTQEINGSNLLEFYKDSKHLSRYLHIIANSPRYPVILDAKRRVCSLPPIINSEFSKISVDTRDIFIDVTATDKTKLEIVVNMMTTMFSCYCEEPFTIEPVNIISEHNGCTRVTPNLNPTCFKADIDYLNEACGLSLPEDEICHLLTRMMLTAKPNPNDSKTLLVYVPPLRADILHQCDIMEDLGIAYGYDNLKHTYPAHSVTFGKPFEVNRLADIIRNEVAYAGWSEVMPFILCSHDENYAWLRKTDDSKAVQLANPKTLEFQVVRSSLLPGILKTVRENKNHALPIKIFEVSDVAFCDYSRERMTRNERHLCAIFAGLNSGFEQIHGLLDRVMLMLNTKRIMNPKDSDAVGYWIEAEDDSTFFPGRCAAVYYRKDFGTAGIRVGVFGVLHPLVLEKFELTSAASAVEIDLTLWV</sequence>
<organism>
    <name type="scientific">Schizosaccharomyces pombe (strain 972 / ATCC 24843)</name>
    <name type="common">Fission yeast</name>
    <dbReference type="NCBI Taxonomy" id="284812"/>
    <lineage>
        <taxon>Eukaryota</taxon>
        <taxon>Fungi</taxon>
        <taxon>Dikarya</taxon>
        <taxon>Ascomycota</taxon>
        <taxon>Taphrinomycotina</taxon>
        <taxon>Schizosaccharomycetes</taxon>
        <taxon>Schizosaccharomycetales</taxon>
        <taxon>Schizosaccharomycetaceae</taxon>
        <taxon>Schizosaccharomyces</taxon>
    </lineage>
</organism>
<evidence type="ECO:0000250" key="1"/>
<evidence type="ECO:0000250" key="2">
    <source>
        <dbReference type="UniProtKB" id="A5K464"/>
    </source>
</evidence>
<evidence type="ECO:0000255" key="3">
    <source>
        <dbReference type="PROSITE-ProRule" id="PRU00816"/>
    </source>
</evidence>
<evidence type="ECO:0000269" key="4">
    <source>
    </source>
</evidence>
<evidence type="ECO:0000305" key="5"/>
<accession>O42849</accession>
<reference key="1">
    <citation type="journal article" date="2002" name="Nature">
        <title>The genome sequence of Schizosaccharomyces pombe.</title>
        <authorList>
            <person name="Wood V."/>
            <person name="Gwilliam R."/>
            <person name="Rajandream M.A."/>
            <person name="Lyne M.H."/>
            <person name="Lyne R."/>
            <person name="Stewart A."/>
            <person name="Sgouros J.G."/>
            <person name="Peat N."/>
            <person name="Hayles J."/>
            <person name="Baker S.G."/>
            <person name="Basham D."/>
            <person name="Bowman S."/>
            <person name="Brooks K."/>
            <person name="Brown D."/>
            <person name="Brown S."/>
            <person name="Chillingworth T."/>
            <person name="Churcher C.M."/>
            <person name="Collins M."/>
            <person name="Connor R."/>
            <person name="Cronin A."/>
            <person name="Davis P."/>
            <person name="Feltwell T."/>
            <person name="Fraser A."/>
            <person name="Gentles S."/>
            <person name="Goble A."/>
            <person name="Hamlin N."/>
            <person name="Harris D.E."/>
            <person name="Hidalgo J."/>
            <person name="Hodgson G."/>
            <person name="Holroyd S."/>
            <person name="Hornsby T."/>
            <person name="Howarth S."/>
            <person name="Huckle E.J."/>
            <person name="Hunt S."/>
            <person name="Jagels K."/>
            <person name="James K.D."/>
            <person name="Jones L."/>
            <person name="Jones M."/>
            <person name="Leather S."/>
            <person name="McDonald S."/>
            <person name="McLean J."/>
            <person name="Mooney P."/>
            <person name="Moule S."/>
            <person name="Mungall K.L."/>
            <person name="Murphy L.D."/>
            <person name="Niblett D."/>
            <person name="Odell C."/>
            <person name="Oliver K."/>
            <person name="O'Neil S."/>
            <person name="Pearson D."/>
            <person name="Quail M.A."/>
            <person name="Rabbinowitsch E."/>
            <person name="Rutherford K.M."/>
            <person name="Rutter S."/>
            <person name="Saunders D."/>
            <person name="Seeger K."/>
            <person name="Sharp S."/>
            <person name="Skelton J."/>
            <person name="Simmonds M.N."/>
            <person name="Squares R."/>
            <person name="Squares S."/>
            <person name="Stevens K."/>
            <person name="Taylor K."/>
            <person name="Taylor R.G."/>
            <person name="Tivey A."/>
            <person name="Walsh S.V."/>
            <person name="Warren T."/>
            <person name="Whitehead S."/>
            <person name="Woodward J.R."/>
            <person name="Volckaert G."/>
            <person name="Aert R."/>
            <person name="Robben J."/>
            <person name="Grymonprez B."/>
            <person name="Weltjens I."/>
            <person name="Vanstreels E."/>
            <person name="Rieger M."/>
            <person name="Schaefer M."/>
            <person name="Mueller-Auer S."/>
            <person name="Gabel C."/>
            <person name="Fuchs M."/>
            <person name="Duesterhoeft A."/>
            <person name="Fritzc C."/>
            <person name="Holzer E."/>
            <person name="Moestl D."/>
            <person name="Hilbert H."/>
            <person name="Borzym K."/>
            <person name="Langer I."/>
            <person name="Beck A."/>
            <person name="Lehrach H."/>
            <person name="Reinhardt R."/>
            <person name="Pohl T.M."/>
            <person name="Eger P."/>
            <person name="Zimmermann W."/>
            <person name="Wedler H."/>
            <person name="Wambutt R."/>
            <person name="Purnelle B."/>
            <person name="Goffeau A."/>
            <person name="Cadieu E."/>
            <person name="Dreano S."/>
            <person name="Gloux S."/>
            <person name="Lelaure V."/>
            <person name="Mottier S."/>
            <person name="Galibert F."/>
            <person name="Aves S.J."/>
            <person name="Xiang Z."/>
            <person name="Hunt C."/>
            <person name="Moore K."/>
            <person name="Hurst S.M."/>
            <person name="Lucas M."/>
            <person name="Rochet M."/>
            <person name="Gaillardin C."/>
            <person name="Tallada V.A."/>
            <person name="Garzon A."/>
            <person name="Thode G."/>
            <person name="Daga R.R."/>
            <person name="Cruzado L."/>
            <person name="Jimenez J."/>
            <person name="Sanchez M."/>
            <person name="del Rey F."/>
            <person name="Benito J."/>
            <person name="Dominguez A."/>
            <person name="Revuelta J.L."/>
            <person name="Moreno S."/>
            <person name="Armstrong J."/>
            <person name="Forsburg S.L."/>
            <person name="Cerutti L."/>
            <person name="Lowe T."/>
            <person name="McCombie W.R."/>
            <person name="Paulsen I."/>
            <person name="Potashkin J."/>
            <person name="Shpakovski G.V."/>
            <person name="Ussery D."/>
            <person name="Barrell B.G."/>
            <person name="Nurse P."/>
        </authorList>
    </citation>
    <scope>NUCLEOTIDE SEQUENCE [LARGE SCALE GENOMIC DNA]</scope>
    <source>
        <strain>972 / ATCC 24843</strain>
    </source>
</reference>
<reference key="2">
    <citation type="journal article" date="2006" name="Nat. Biotechnol.">
        <title>ORFeome cloning and global analysis of protein localization in the fission yeast Schizosaccharomyces pombe.</title>
        <authorList>
            <person name="Matsuyama A."/>
            <person name="Arai R."/>
            <person name="Yashiroda Y."/>
            <person name="Shirai A."/>
            <person name="Kamata A."/>
            <person name="Sekido S."/>
            <person name="Kobayashi Y."/>
            <person name="Hashimoto A."/>
            <person name="Hamamoto M."/>
            <person name="Hiraoka Y."/>
            <person name="Horinouchi S."/>
            <person name="Yoshida M."/>
        </authorList>
    </citation>
    <scope>SUBCELLULAR LOCATION [LARGE SCALE ANALYSIS]</scope>
</reference>
<dbReference type="EC" id="6.1.1.20"/>
<dbReference type="EMBL" id="CU329670">
    <property type="protein sequence ID" value="CAA16986.1"/>
    <property type="molecule type" value="Genomic_DNA"/>
</dbReference>
<dbReference type="PIR" id="T38232">
    <property type="entry name" value="T38232"/>
</dbReference>
<dbReference type="RefSeq" id="NP_594442.1">
    <property type="nucleotide sequence ID" value="NM_001019871.2"/>
</dbReference>
<dbReference type="SMR" id="O42849"/>
<dbReference type="BioGRID" id="278459">
    <property type="interactions" value="3"/>
</dbReference>
<dbReference type="FunCoup" id="O42849">
    <property type="interactions" value="737"/>
</dbReference>
<dbReference type="STRING" id="284812.O42849"/>
<dbReference type="iPTMnet" id="O42849"/>
<dbReference type="PaxDb" id="4896-SPAC23A1.12c.1"/>
<dbReference type="EnsemblFungi" id="SPAC23A1.12c.1">
    <property type="protein sequence ID" value="SPAC23A1.12c.1:pep"/>
    <property type="gene ID" value="SPAC23A1.12c"/>
</dbReference>
<dbReference type="GeneID" id="2541974"/>
<dbReference type="KEGG" id="spo:2541974"/>
<dbReference type="PomBase" id="SPAC23A1.12c">
    <property type="gene designation" value="frs1"/>
</dbReference>
<dbReference type="VEuPathDB" id="FungiDB:SPAC23A1.12c"/>
<dbReference type="eggNOG" id="KOG2472">
    <property type="taxonomic scope" value="Eukaryota"/>
</dbReference>
<dbReference type="HOGENOM" id="CLU_020279_2_0_1"/>
<dbReference type="InParanoid" id="O42849"/>
<dbReference type="OMA" id="FPGRCAN"/>
<dbReference type="PhylomeDB" id="O42849"/>
<dbReference type="PRO" id="PR:O42849"/>
<dbReference type="Proteomes" id="UP000002485">
    <property type="component" value="Chromosome I"/>
</dbReference>
<dbReference type="GO" id="GO:0005829">
    <property type="term" value="C:cytosol"/>
    <property type="evidence" value="ECO:0007005"/>
    <property type="project" value="PomBase"/>
</dbReference>
<dbReference type="GO" id="GO:0005634">
    <property type="term" value="C:nucleus"/>
    <property type="evidence" value="ECO:0007005"/>
    <property type="project" value="PomBase"/>
</dbReference>
<dbReference type="GO" id="GO:0009328">
    <property type="term" value="C:phenylalanine-tRNA ligase complex"/>
    <property type="evidence" value="ECO:0000318"/>
    <property type="project" value="GO_Central"/>
</dbReference>
<dbReference type="GO" id="GO:0005524">
    <property type="term" value="F:ATP binding"/>
    <property type="evidence" value="ECO:0007669"/>
    <property type="project" value="UniProtKB-KW"/>
</dbReference>
<dbReference type="GO" id="GO:0000287">
    <property type="term" value="F:magnesium ion binding"/>
    <property type="evidence" value="ECO:0000250"/>
    <property type="project" value="UniProtKB"/>
</dbReference>
<dbReference type="GO" id="GO:0004826">
    <property type="term" value="F:phenylalanine-tRNA ligase activity"/>
    <property type="evidence" value="ECO:0007669"/>
    <property type="project" value="UniProtKB-EC"/>
</dbReference>
<dbReference type="GO" id="GO:0003723">
    <property type="term" value="F:RNA binding"/>
    <property type="evidence" value="ECO:0007669"/>
    <property type="project" value="InterPro"/>
</dbReference>
<dbReference type="GO" id="GO:0002181">
    <property type="term" value="P:cytoplasmic translation"/>
    <property type="evidence" value="ECO:0000303"/>
    <property type="project" value="PomBase"/>
</dbReference>
<dbReference type="GO" id="GO:0006432">
    <property type="term" value="P:phenylalanyl-tRNA aminoacylation"/>
    <property type="evidence" value="ECO:0000318"/>
    <property type="project" value="GO_Central"/>
</dbReference>
<dbReference type="CDD" id="cd00769">
    <property type="entry name" value="PheRS_beta_core"/>
    <property type="match status" value="1"/>
</dbReference>
<dbReference type="FunFam" id="3.30.930.10:FF:000059">
    <property type="entry name" value="phenylalanine--tRNA ligase beta subunit"/>
    <property type="match status" value="1"/>
</dbReference>
<dbReference type="FunFam" id="3.50.40.10:FF:000002">
    <property type="entry name" value="phenylalanine--tRNA ligase beta subunit"/>
    <property type="match status" value="1"/>
</dbReference>
<dbReference type="FunFam" id="3.30.56.10:FF:000012">
    <property type="entry name" value="Phenylalanine-tRNA ligase, beta subunit"/>
    <property type="match status" value="1"/>
</dbReference>
<dbReference type="FunFam" id="3.30.56.10:FF:000006">
    <property type="entry name" value="Phenylalanyl-tRNA synthetase subunit beta"/>
    <property type="match status" value="1"/>
</dbReference>
<dbReference type="Gene3D" id="3.30.56.10">
    <property type="match status" value="2"/>
</dbReference>
<dbReference type="Gene3D" id="3.30.930.10">
    <property type="entry name" value="Bira Bifunctional Protein, Domain 2"/>
    <property type="match status" value="1"/>
</dbReference>
<dbReference type="Gene3D" id="3.50.40.10">
    <property type="entry name" value="Phenylalanyl-trna Synthetase, Chain B, domain 3"/>
    <property type="match status" value="1"/>
</dbReference>
<dbReference type="InterPro" id="IPR045864">
    <property type="entry name" value="aa-tRNA-synth_II/BPL/LPL"/>
</dbReference>
<dbReference type="InterPro" id="IPR005146">
    <property type="entry name" value="B3/B4_tRNA-bd"/>
</dbReference>
<dbReference type="InterPro" id="IPR009061">
    <property type="entry name" value="DNA-bd_dom_put_sf"/>
</dbReference>
<dbReference type="InterPro" id="IPR045060">
    <property type="entry name" value="Phe-tRNA-ligase_IIc_bsu"/>
</dbReference>
<dbReference type="InterPro" id="IPR004531">
    <property type="entry name" value="Phe-tRNA-synth_IIc_bsu_arc_euk"/>
</dbReference>
<dbReference type="InterPro" id="IPR020825">
    <property type="entry name" value="Phe-tRNA_synthase-like_B3/B4"/>
</dbReference>
<dbReference type="InterPro" id="IPR041616">
    <property type="entry name" value="PheRS_beta_core"/>
</dbReference>
<dbReference type="InterPro" id="IPR040659">
    <property type="entry name" value="PhetRS_B1"/>
</dbReference>
<dbReference type="InterPro" id="IPR005147">
    <property type="entry name" value="tRNA_synthase_B5-dom"/>
</dbReference>
<dbReference type="NCBIfam" id="TIGR00471">
    <property type="entry name" value="pheT_arch"/>
    <property type="match status" value="1"/>
</dbReference>
<dbReference type="PANTHER" id="PTHR10947:SF0">
    <property type="entry name" value="PHENYLALANINE--TRNA LIGASE BETA SUBUNIT"/>
    <property type="match status" value="1"/>
</dbReference>
<dbReference type="PANTHER" id="PTHR10947">
    <property type="entry name" value="PHENYLALANYL-TRNA SYNTHETASE BETA CHAIN AND LEUCINE-RICH REPEAT-CONTAINING PROTEIN 47"/>
    <property type="match status" value="1"/>
</dbReference>
<dbReference type="Pfam" id="PF03483">
    <property type="entry name" value="B3_4"/>
    <property type="match status" value="1"/>
</dbReference>
<dbReference type="Pfam" id="PF03484">
    <property type="entry name" value="B5"/>
    <property type="match status" value="1"/>
</dbReference>
<dbReference type="Pfam" id="PF18262">
    <property type="entry name" value="PhetRS_B1"/>
    <property type="match status" value="1"/>
</dbReference>
<dbReference type="Pfam" id="PF17759">
    <property type="entry name" value="tRNA_synthFbeta"/>
    <property type="match status" value="1"/>
</dbReference>
<dbReference type="SMART" id="SM00873">
    <property type="entry name" value="B3_4"/>
    <property type="match status" value="1"/>
</dbReference>
<dbReference type="SMART" id="SM00874">
    <property type="entry name" value="B5"/>
    <property type="match status" value="1"/>
</dbReference>
<dbReference type="SUPFAM" id="SSF55681">
    <property type="entry name" value="Class II aaRS and biotin synthetases"/>
    <property type="match status" value="1"/>
</dbReference>
<dbReference type="SUPFAM" id="SSF46955">
    <property type="entry name" value="Putative DNA-binding domain"/>
    <property type="match status" value="2"/>
</dbReference>
<dbReference type="PROSITE" id="PS51483">
    <property type="entry name" value="B5"/>
    <property type="match status" value="1"/>
</dbReference>
<feature type="chain" id="PRO_0000127022" description="Phenylalanine--tRNA ligase beta subunit">
    <location>
        <begin position="1"/>
        <end position="589"/>
    </location>
</feature>
<feature type="domain" description="B5" evidence="3">
    <location>
        <begin position="290"/>
        <end position="368"/>
    </location>
</feature>
<feature type="binding site" evidence="3">
    <location>
        <position position="346"/>
    </location>
    <ligand>
        <name>Mg(2+)</name>
        <dbReference type="ChEBI" id="CHEBI:18420"/>
        <note>shared with alpha subunit</note>
    </ligand>
</feature>
<feature type="binding site" evidence="3">
    <location>
        <position position="352"/>
    </location>
    <ligand>
        <name>Mg(2+)</name>
        <dbReference type="ChEBI" id="CHEBI:18420"/>
        <note>shared with alpha subunit</note>
    </ligand>
</feature>
<feature type="binding site" evidence="3">
    <location>
        <position position="355"/>
    </location>
    <ligand>
        <name>Mg(2+)</name>
        <dbReference type="ChEBI" id="CHEBI:18420"/>
        <note>shared with alpha subunit</note>
    </ligand>
</feature>
<feature type="binding site" evidence="3">
    <location>
        <position position="356"/>
    </location>
    <ligand>
        <name>Mg(2+)</name>
        <dbReference type="ChEBI" id="CHEBI:18420"/>
        <note>shared with alpha subunit</note>
    </ligand>
</feature>
<keyword id="KW-0030">Aminoacyl-tRNA synthetase</keyword>
<keyword id="KW-0067">ATP-binding</keyword>
<keyword id="KW-0963">Cytoplasm</keyword>
<keyword id="KW-0436">Ligase</keyword>
<keyword id="KW-0460">Magnesium</keyword>
<keyword id="KW-0479">Metal-binding</keyword>
<keyword id="KW-0547">Nucleotide-binding</keyword>
<keyword id="KW-0539">Nucleus</keyword>
<keyword id="KW-0648">Protein biosynthesis</keyword>
<keyword id="KW-1185">Reference proteome</keyword>